<protein>
    <recommendedName>
        <fullName>Homeobox transcription factor phx1</fullName>
    </recommendedName>
</protein>
<proteinExistence type="inferred from homology"/>
<name>PHX1_SCHPO</name>
<feature type="chain" id="PRO_0000049410" description="Homeobox transcription factor phx1">
    <location>
        <begin position="1"/>
        <end position="942"/>
    </location>
</feature>
<feature type="DNA-binding region" description="Homeobox" evidence="1">
    <location>
        <begin position="164"/>
        <end position="224"/>
    </location>
</feature>
<feature type="region of interest" description="Disordered" evidence="2">
    <location>
        <begin position="1"/>
        <end position="54"/>
    </location>
</feature>
<feature type="region of interest" description="Disordered" evidence="2">
    <location>
        <begin position="61"/>
        <end position="80"/>
    </location>
</feature>
<feature type="region of interest" description="Disordered" evidence="2">
    <location>
        <begin position="87"/>
        <end position="172"/>
    </location>
</feature>
<feature type="region of interest" description="Disordered" evidence="2">
    <location>
        <begin position="604"/>
        <end position="651"/>
    </location>
</feature>
<feature type="region of interest" description="Disordered" evidence="2">
    <location>
        <begin position="892"/>
        <end position="922"/>
    </location>
</feature>
<feature type="compositionally biased region" description="Polar residues" evidence="2">
    <location>
        <begin position="1"/>
        <end position="19"/>
    </location>
</feature>
<feature type="compositionally biased region" description="Polar residues" evidence="2">
    <location>
        <begin position="61"/>
        <end position="73"/>
    </location>
</feature>
<feature type="compositionally biased region" description="Polar residues" evidence="2">
    <location>
        <begin position="99"/>
        <end position="116"/>
    </location>
</feature>
<feature type="compositionally biased region" description="Polar residues" evidence="2">
    <location>
        <begin position="122"/>
        <end position="135"/>
    </location>
</feature>
<feature type="compositionally biased region" description="Basic and acidic residues" evidence="2">
    <location>
        <begin position="142"/>
        <end position="151"/>
    </location>
</feature>
<feature type="compositionally biased region" description="Low complexity" evidence="2">
    <location>
        <begin position="153"/>
        <end position="164"/>
    </location>
</feature>
<feature type="compositionally biased region" description="Polar residues" evidence="2">
    <location>
        <begin position="604"/>
        <end position="614"/>
    </location>
</feature>
<feature type="compositionally biased region" description="Polar residues" evidence="2">
    <location>
        <begin position="630"/>
        <end position="641"/>
    </location>
</feature>
<sequence length="942" mass="103986">MRSYSNPENGGQINDNINYSEKRPTMLPENLSLSNYDMDSFLGQFPSDNNMQLPHSTYEQHLQGEQQNPTNPNYFPPEFDENKVDWKQEKPKPDAPSFADNNSFDNVNSSKLTNPSPVQPNIVKSESEPANSKQNEVVEATSVEKAKENVAHESGTPESGGSTSAPKSKKQRLTADQLAYLLREFSKDTNPPPAIREKIGRELNIPERSVTIWFQNRRAKSKLISRRQEEERQRILREQRELDSLNQKVSQAFAHEVLSTSPTSPYVGGIAANRQYANTLLPKPTRKTGNFYMKSGPMQSSMEPCIAESDIPIRQSLSSTYYNSLSPNAVPVSSQRKYSASSYSAIPNAMSVSNQAFDVESPPSSYATPLTGIRMPQPESDLYSYPREVSPSSGGYRMFGHSKPSSYKASGPVRPPNMATGHMRTSSEPTSYDSEFYYFSCTLLVIGLWKRLRASPQDLMCFYSPPKKLFAYLIQFQGIQYRIEYSFFVIESIHVFRVEEPLLNELSATASSRDKPAPNEYWLQMDIQLSVPPVFHMITSEGQGNCTDFTEGNQASEVLLHSLMGRATSMFQMLDRVRRASPELGSVIRLQKGLNPHQFLDPQWANQLPRQPDSSVFDHQGRNPPIQGLSHDTSSEYGNKSQFKRLRSTSTPARQDLAQHLLPPKTNTEGLMHAQSVSPITQAMKSANVLEGSSTRLNSYEPSVSSAYPHHNLALNLDNTQFGELGTSNISYPLSAPSDVGSLPRASNSPSRPVMHPNTQGINTEIKDMAAQFPNSQTGGLTPNSWSMNTNVSVPFTTQNREFGGIGSSSISTTMNAPSQQLSQVPFGDVSLATENSVPSYGFEVPSEESVYAQARTNSSVSAGVAPRLFIQTPSIPLASSAGQDSNLIEKSSSGGVYASQPGASGYLSHDQSGSPFEDVYSPSAGIDFQKLRGQQFSPDMQ</sequence>
<evidence type="ECO:0000255" key="1">
    <source>
        <dbReference type="PROSITE-ProRule" id="PRU00108"/>
    </source>
</evidence>
<evidence type="ECO:0000256" key="2">
    <source>
        <dbReference type="SAM" id="MobiDB-lite"/>
    </source>
</evidence>
<evidence type="ECO:0000269" key="3">
    <source>
    </source>
</evidence>
<evidence type="ECO:0000269" key="4">
    <source>
    </source>
</evidence>
<comment type="function">
    <text evidence="3">Trnascription factor that regulates the expression of the homocitrate synthase (HCS) lys4.</text>
</comment>
<comment type="subcellular location">
    <subcellularLocation>
        <location evidence="1 4">Nucleus</location>
    </subcellularLocation>
</comment>
<organism>
    <name type="scientific">Schizosaccharomyces pombe (strain 972 / ATCC 24843)</name>
    <name type="common">Fission yeast</name>
    <dbReference type="NCBI Taxonomy" id="284812"/>
    <lineage>
        <taxon>Eukaryota</taxon>
        <taxon>Fungi</taxon>
        <taxon>Dikarya</taxon>
        <taxon>Ascomycota</taxon>
        <taxon>Taphrinomycotina</taxon>
        <taxon>Schizosaccharomycetes</taxon>
        <taxon>Schizosaccharomycetales</taxon>
        <taxon>Schizosaccharomycetaceae</taxon>
        <taxon>Schizosaccharomyces</taxon>
    </lineage>
</organism>
<accession>Q10328</accession>
<gene>
    <name type="primary">phx1</name>
    <name type="ORF">SPAC32A11.03c</name>
</gene>
<dbReference type="EMBL" id="CU329670">
    <property type="protein sequence ID" value="CAA93700.1"/>
    <property type="molecule type" value="Genomic_DNA"/>
</dbReference>
<dbReference type="PIR" id="T38649">
    <property type="entry name" value="T38649"/>
</dbReference>
<dbReference type="RefSeq" id="NP_593776.1">
    <property type="nucleotide sequence ID" value="NM_001019205.2"/>
</dbReference>
<dbReference type="SMR" id="Q10328"/>
<dbReference type="BioGRID" id="278869">
    <property type="interactions" value="8"/>
</dbReference>
<dbReference type="FunCoup" id="Q10328">
    <property type="interactions" value="2"/>
</dbReference>
<dbReference type="STRING" id="284812.Q10328"/>
<dbReference type="iPTMnet" id="Q10328"/>
<dbReference type="SwissPalm" id="Q10328"/>
<dbReference type="PaxDb" id="4896-SPAC32A11.03c.1"/>
<dbReference type="EnsemblFungi" id="SPAC32A11.03c.1">
    <property type="protein sequence ID" value="SPAC32A11.03c.1:pep"/>
    <property type="gene ID" value="SPAC32A11.03c"/>
</dbReference>
<dbReference type="GeneID" id="2542405"/>
<dbReference type="KEGG" id="spo:2542405"/>
<dbReference type="PomBase" id="SPAC32A11.03c">
    <property type="gene designation" value="phx1"/>
</dbReference>
<dbReference type="VEuPathDB" id="FungiDB:SPAC32A11.03c"/>
<dbReference type="eggNOG" id="KOG0849">
    <property type="taxonomic scope" value="Eukaryota"/>
</dbReference>
<dbReference type="HOGENOM" id="CLU_335282_0_0_1"/>
<dbReference type="InParanoid" id="Q10328"/>
<dbReference type="PRO" id="PR:Q10328"/>
<dbReference type="Proteomes" id="UP000002485">
    <property type="component" value="Chromosome I"/>
</dbReference>
<dbReference type="GO" id="GO:0000785">
    <property type="term" value="C:chromatin"/>
    <property type="evidence" value="ECO:0000305"/>
    <property type="project" value="PomBase"/>
</dbReference>
<dbReference type="GO" id="GO:0005634">
    <property type="term" value="C:nucleus"/>
    <property type="evidence" value="ECO:0000314"/>
    <property type="project" value="PomBase"/>
</dbReference>
<dbReference type="GO" id="GO:0001228">
    <property type="term" value="F:DNA-binding transcription activator activity, RNA polymerase II-specific"/>
    <property type="evidence" value="ECO:0000269"/>
    <property type="project" value="PomBase"/>
</dbReference>
<dbReference type="GO" id="GO:0003700">
    <property type="term" value="F:DNA-binding transcription factor activity"/>
    <property type="evidence" value="ECO:0000269"/>
    <property type="project" value="PomBase"/>
</dbReference>
<dbReference type="GO" id="GO:0000978">
    <property type="term" value="F:RNA polymerase II cis-regulatory region sequence-specific DNA binding"/>
    <property type="evidence" value="ECO:0000314"/>
    <property type="project" value="PomBase"/>
</dbReference>
<dbReference type="GO" id="GO:0030154">
    <property type="term" value="P:cell differentiation"/>
    <property type="evidence" value="ECO:0000318"/>
    <property type="project" value="GO_Central"/>
</dbReference>
<dbReference type="GO" id="GO:2001172">
    <property type="term" value="P:positive regulation of glycolytic fermentation to ethanol"/>
    <property type="evidence" value="ECO:0000315"/>
    <property type="project" value="PomBase"/>
</dbReference>
<dbReference type="GO" id="GO:0006357">
    <property type="term" value="P:regulation of transcription by RNA polymerase II"/>
    <property type="evidence" value="ECO:0000315"/>
    <property type="project" value="PomBase"/>
</dbReference>
<dbReference type="CDD" id="cd00086">
    <property type="entry name" value="homeodomain"/>
    <property type="match status" value="1"/>
</dbReference>
<dbReference type="Gene3D" id="1.10.10.60">
    <property type="entry name" value="Homeodomain-like"/>
    <property type="match status" value="1"/>
</dbReference>
<dbReference type="InterPro" id="IPR001356">
    <property type="entry name" value="HD"/>
</dbReference>
<dbReference type="InterPro" id="IPR051000">
    <property type="entry name" value="Homeobox_DNA-bind_prot"/>
</dbReference>
<dbReference type="InterPro" id="IPR009057">
    <property type="entry name" value="Homeodomain-like_sf"/>
</dbReference>
<dbReference type="PANTHER" id="PTHR24324:SF5">
    <property type="entry name" value="HEMATOPOIETICALLY-EXPRESSED HOMEOBOX PROTEIN HHEX"/>
    <property type="match status" value="1"/>
</dbReference>
<dbReference type="PANTHER" id="PTHR24324">
    <property type="entry name" value="HOMEOBOX PROTEIN HHEX"/>
    <property type="match status" value="1"/>
</dbReference>
<dbReference type="Pfam" id="PF00046">
    <property type="entry name" value="Homeodomain"/>
    <property type="match status" value="1"/>
</dbReference>
<dbReference type="SMART" id="SM00389">
    <property type="entry name" value="HOX"/>
    <property type="match status" value="1"/>
</dbReference>
<dbReference type="SUPFAM" id="SSF46689">
    <property type="entry name" value="Homeodomain-like"/>
    <property type="match status" value="1"/>
</dbReference>
<dbReference type="PROSITE" id="PS50071">
    <property type="entry name" value="HOMEOBOX_2"/>
    <property type="match status" value="1"/>
</dbReference>
<keyword id="KW-0238">DNA-binding</keyword>
<keyword id="KW-0371">Homeobox</keyword>
<keyword id="KW-0539">Nucleus</keyword>
<keyword id="KW-1185">Reference proteome</keyword>
<keyword id="KW-0804">Transcription</keyword>
<keyword id="KW-0805">Transcription regulation</keyword>
<reference key="1">
    <citation type="journal article" date="2002" name="Nature">
        <title>The genome sequence of Schizosaccharomyces pombe.</title>
        <authorList>
            <person name="Wood V."/>
            <person name="Gwilliam R."/>
            <person name="Rajandream M.A."/>
            <person name="Lyne M.H."/>
            <person name="Lyne R."/>
            <person name="Stewart A."/>
            <person name="Sgouros J.G."/>
            <person name="Peat N."/>
            <person name="Hayles J."/>
            <person name="Baker S.G."/>
            <person name="Basham D."/>
            <person name="Bowman S."/>
            <person name="Brooks K."/>
            <person name="Brown D."/>
            <person name="Brown S."/>
            <person name="Chillingworth T."/>
            <person name="Churcher C.M."/>
            <person name="Collins M."/>
            <person name="Connor R."/>
            <person name="Cronin A."/>
            <person name="Davis P."/>
            <person name="Feltwell T."/>
            <person name="Fraser A."/>
            <person name="Gentles S."/>
            <person name="Goble A."/>
            <person name="Hamlin N."/>
            <person name="Harris D.E."/>
            <person name="Hidalgo J."/>
            <person name="Hodgson G."/>
            <person name="Holroyd S."/>
            <person name="Hornsby T."/>
            <person name="Howarth S."/>
            <person name="Huckle E.J."/>
            <person name="Hunt S."/>
            <person name="Jagels K."/>
            <person name="James K.D."/>
            <person name="Jones L."/>
            <person name="Jones M."/>
            <person name="Leather S."/>
            <person name="McDonald S."/>
            <person name="McLean J."/>
            <person name="Mooney P."/>
            <person name="Moule S."/>
            <person name="Mungall K.L."/>
            <person name="Murphy L.D."/>
            <person name="Niblett D."/>
            <person name="Odell C."/>
            <person name="Oliver K."/>
            <person name="O'Neil S."/>
            <person name="Pearson D."/>
            <person name="Quail M.A."/>
            <person name="Rabbinowitsch E."/>
            <person name="Rutherford K.M."/>
            <person name="Rutter S."/>
            <person name="Saunders D."/>
            <person name="Seeger K."/>
            <person name="Sharp S."/>
            <person name="Skelton J."/>
            <person name="Simmonds M.N."/>
            <person name="Squares R."/>
            <person name="Squares S."/>
            <person name="Stevens K."/>
            <person name="Taylor K."/>
            <person name="Taylor R.G."/>
            <person name="Tivey A."/>
            <person name="Walsh S.V."/>
            <person name="Warren T."/>
            <person name="Whitehead S."/>
            <person name="Woodward J.R."/>
            <person name="Volckaert G."/>
            <person name="Aert R."/>
            <person name="Robben J."/>
            <person name="Grymonprez B."/>
            <person name="Weltjens I."/>
            <person name="Vanstreels E."/>
            <person name="Rieger M."/>
            <person name="Schaefer M."/>
            <person name="Mueller-Auer S."/>
            <person name="Gabel C."/>
            <person name="Fuchs M."/>
            <person name="Duesterhoeft A."/>
            <person name="Fritzc C."/>
            <person name="Holzer E."/>
            <person name="Moestl D."/>
            <person name="Hilbert H."/>
            <person name="Borzym K."/>
            <person name="Langer I."/>
            <person name="Beck A."/>
            <person name="Lehrach H."/>
            <person name="Reinhardt R."/>
            <person name="Pohl T.M."/>
            <person name="Eger P."/>
            <person name="Zimmermann W."/>
            <person name="Wedler H."/>
            <person name="Wambutt R."/>
            <person name="Purnelle B."/>
            <person name="Goffeau A."/>
            <person name="Cadieu E."/>
            <person name="Dreano S."/>
            <person name="Gloux S."/>
            <person name="Lelaure V."/>
            <person name="Mottier S."/>
            <person name="Galibert F."/>
            <person name="Aves S.J."/>
            <person name="Xiang Z."/>
            <person name="Hunt C."/>
            <person name="Moore K."/>
            <person name="Hurst S.M."/>
            <person name="Lucas M."/>
            <person name="Rochet M."/>
            <person name="Gaillardin C."/>
            <person name="Tallada V.A."/>
            <person name="Garzon A."/>
            <person name="Thode G."/>
            <person name="Daga R.R."/>
            <person name="Cruzado L."/>
            <person name="Jimenez J."/>
            <person name="Sanchez M."/>
            <person name="del Rey F."/>
            <person name="Benito J."/>
            <person name="Dominguez A."/>
            <person name="Revuelta J.L."/>
            <person name="Moreno S."/>
            <person name="Armstrong J."/>
            <person name="Forsburg S.L."/>
            <person name="Cerutti L."/>
            <person name="Lowe T."/>
            <person name="McCombie W.R."/>
            <person name="Paulsen I."/>
            <person name="Potashkin J."/>
            <person name="Shpakovski G.V."/>
            <person name="Ussery D."/>
            <person name="Barrell B.G."/>
            <person name="Nurse P."/>
        </authorList>
    </citation>
    <scope>NUCLEOTIDE SEQUENCE [LARGE SCALE GENOMIC DNA]</scope>
    <source>
        <strain>972 / ATCC 24843</strain>
    </source>
</reference>
<reference key="2">
    <citation type="journal article" date="2006" name="J. Biol. Chem.">
        <title>Inactivation of homocitrate synthase causes lysine auxotrophy in copper/zinc-containing superoxide dismutase-deficient yeast Schizosaccharomyces pombe.</title>
        <authorList>
            <person name="Kwon E.S."/>
            <person name="Jeong J.H."/>
            <person name="Roe J.H."/>
        </authorList>
    </citation>
    <scope>FUNCTION</scope>
</reference>
<reference key="3">
    <citation type="journal article" date="2006" name="Nat. Biotechnol.">
        <title>ORFeome cloning and global analysis of protein localization in the fission yeast Schizosaccharomyces pombe.</title>
        <authorList>
            <person name="Matsuyama A."/>
            <person name="Arai R."/>
            <person name="Yashiroda Y."/>
            <person name="Shirai A."/>
            <person name="Kamata A."/>
            <person name="Sekido S."/>
            <person name="Kobayashi Y."/>
            <person name="Hashimoto A."/>
            <person name="Hamamoto M."/>
            <person name="Hiraoka Y."/>
            <person name="Horinouchi S."/>
            <person name="Yoshida M."/>
        </authorList>
    </citation>
    <scope>SUBCELLULAR LOCATION [LARGE SCALE ANALYSIS]</scope>
</reference>